<dbReference type="EMBL" id="CP000011">
    <property type="protein sequence ID" value="AAU46021.1"/>
    <property type="molecule type" value="Genomic_DNA"/>
</dbReference>
<dbReference type="RefSeq" id="WP_004188462.1">
    <property type="nucleotide sequence ID" value="NC_006349.2"/>
</dbReference>
<dbReference type="RefSeq" id="YP_106114.1">
    <property type="nucleotide sequence ID" value="NC_006349.2"/>
</dbReference>
<dbReference type="SMR" id="Q62B14"/>
<dbReference type="GeneID" id="93063705"/>
<dbReference type="KEGG" id="bma:BMAA1523"/>
<dbReference type="PATRIC" id="fig|243160.12.peg.5099"/>
<dbReference type="eggNOG" id="ENOG5033HJR">
    <property type="taxonomic scope" value="Bacteria"/>
</dbReference>
<dbReference type="HOGENOM" id="CLU_1064256_0_0_4"/>
<dbReference type="Proteomes" id="UP000006693">
    <property type="component" value="Chromosome 2"/>
</dbReference>
<dbReference type="GO" id="GO:0005576">
    <property type="term" value="C:extracellular region"/>
    <property type="evidence" value="ECO:0007669"/>
    <property type="project" value="UniProtKB-SubCell"/>
</dbReference>
<dbReference type="GO" id="GO:0005096">
    <property type="term" value="F:GTPase activator activity"/>
    <property type="evidence" value="ECO:0007669"/>
    <property type="project" value="UniProtKB-KW"/>
</dbReference>
<dbReference type="GO" id="GO:0005085">
    <property type="term" value="F:guanyl-nucleotide exchange factor activity"/>
    <property type="evidence" value="ECO:0007669"/>
    <property type="project" value="UniProtKB-KW"/>
</dbReference>
<dbReference type="GO" id="GO:0030036">
    <property type="term" value="P:actin cytoskeleton organization"/>
    <property type="evidence" value="ECO:0007669"/>
    <property type="project" value="InterPro"/>
</dbReference>
<dbReference type="Gene3D" id="1.10.4120.10">
    <property type="entry name" value="SopE-like, GEF domain"/>
    <property type="match status" value="1"/>
</dbReference>
<dbReference type="InterPro" id="IPR005414">
    <property type="entry name" value="SopE"/>
</dbReference>
<dbReference type="InterPro" id="IPR035949">
    <property type="entry name" value="SopE-like_GEF_dom_sf"/>
</dbReference>
<dbReference type="InterPro" id="IPR016019">
    <property type="entry name" value="SopE_GEF_dom"/>
</dbReference>
<dbReference type="NCBIfam" id="NF011808">
    <property type="entry name" value="PRK15278.1"/>
    <property type="match status" value="1"/>
</dbReference>
<dbReference type="Pfam" id="PF07487">
    <property type="entry name" value="SopE_GEF"/>
    <property type="match status" value="1"/>
</dbReference>
<dbReference type="PIRSF" id="PIRSF034781">
    <property type="entry name" value="SecIII_sopE"/>
    <property type="match status" value="1"/>
</dbReference>
<dbReference type="PRINTS" id="PR01593">
    <property type="entry name" value="SOPEPROTEIN"/>
</dbReference>
<dbReference type="SUPFAM" id="SSF81832">
    <property type="entry name" value="SopE-like GEF domain"/>
    <property type="match status" value="1"/>
</dbReference>
<organism>
    <name type="scientific">Burkholderia mallei (strain ATCC 23344)</name>
    <dbReference type="NCBI Taxonomy" id="243160"/>
    <lineage>
        <taxon>Bacteria</taxon>
        <taxon>Pseudomonadati</taxon>
        <taxon>Pseudomonadota</taxon>
        <taxon>Betaproteobacteria</taxon>
        <taxon>Burkholderiales</taxon>
        <taxon>Burkholderiaceae</taxon>
        <taxon>Burkholderia</taxon>
        <taxon>pseudomallei group</taxon>
    </lineage>
</organism>
<comment type="function">
    <text evidence="1">Activator for both CDC42 and RAC1 by directly interacting with these Rho GTPases and acting as a guanine nucleotide exchange factor (GEF). This activation results in actin cytoskeleton rearrangements and stimulates membrane ruffling, thus promoting bacterial entry into non-phagocytic cells (By similarity).</text>
</comment>
<comment type="subunit">
    <text evidence="1">Monomer. Interacts with human CDC42 (By similarity).</text>
</comment>
<comment type="subcellular location">
    <subcellularLocation>
        <location evidence="1">Secreted</location>
    </subcellularLocation>
    <text evidence="1">Secreted via the bsa type III secretion system.</text>
</comment>
<comment type="similarity">
    <text evidence="2">Belongs to the GEF (guanine exchange factor) SopE family.</text>
</comment>
<keyword id="KW-0343">GTPase activation</keyword>
<keyword id="KW-0344">Guanine-nucleotide releasing factor</keyword>
<keyword id="KW-1185">Reference proteome</keyword>
<keyword id="KW-0964">Secreted</keyword>
<keyword id="KW-0843">Virulence</keyword>
<accession>Q62B14</accession>
<reference key="1">
    <citation type="journal article" date="2004" name="Proc. Natl. Acad. Sci. U.S.A.">
        <title>Structural flexibility in the Burkholderia mallei genome.</title>
        <authorList>
            <person name="Nierman W.C."/>
            <person name="DeShazer D."/>
            <person name="Kim H.S."/>
            <person name="Tettelin H."/>
            <person name="Nelson K.E."/>
            <person name="Feldblyum T.V."/>
            <person name="Ulrich R.L."/>
            <person name="Ronning C.M."/>
            <person name="Brinkac L.M."/>
            <person name="Daugherty S.C."/>
            <person name="Davidsen T.D."/>
            <person name="DeBoy R.T."/>
            <person name="Dimitrov G."/>
            <person name="Dodson R.J."/>
            <person name="Durkin A.S."/>
            <person name="Gwinn M.L."/>
            <person name="Haft D.H."/>
            <person name="Khouri H.M."/>
            <person name="Kolonay J.F."/>
            <person name="Madupu R."/>
            <person name="Mohammoud Y."/>
            <person name="Nelson W.C."/>
            <person name="Radune D."/>
            <person name="Romero C.M."/>
            <person name="Sarria S."/>
            <person name="Selengut J."/>
            <person name="Shamblin C."/>
            <person name="Sullivan S.A."/>
            <person name="White O."/>
            <person name="Yu Y."/>
            <person name="Zafar N."/>
            <person name="Zhou L."/>
            <person name="Fraser C.M."/>
        </authorList>
    </citation>
    <scope>NUCLEOTIDE SEQUENCE [LARGE SCALE GENOMIC DNA]</scope>
    <source>
        <strain>ATCC 23344</strain>
    </source>
</reference>
<protein>
    <recommendedName>
        <fullName>Guanine nucleotide exchange factor BopE</fullName>
    </recommendedName>
    <alternativeName>
        <fullName>Effector protein BopE</fullName>
    </alternativeName>
</protein>
<gene>
    <name type="primary">bopE</name>
    <name type="ordered locus">BMAA1523</name>
</gene>
<name>BOPE_BURMA</name>
<proteinExistence type="inferred from homology"/>
<sequence length="261" mass="28735">MTYNPRIGGFTHVKQASFDVHVKRGEAQPRTSFAQQIKRIFSKIGETLGQLFRHRAPDSAPGRVRLQGVRYVGSYRPTGDAKQAIRHFVDEAVKQVAHTRTPEIRQDAEFGRQVYEATLCAIFSEAKDRFCMDPATRAGNVRPAFIEALGDAARATGLPGADKQGVFTPSGAGTNPLYTEIRLRADTLMGAELAARPEYRELQPYARQQAIDLVANALPAERSNTLVEFRQTVQTLEATYRRAAQDASRDEKGATNAADGA</sequence>
<feature type="chain" id="PRO_0000344027" description="Guanine nucleotide exchange factor BopE">
    <location>
        <begin position="1"/>
        <end position="261"/>
    </location>
</feature>
<evidence type="ECO:0000250" key="1"/>
<evidence type="ECO:0000305" key="2"/>